<protein>
    <recommendedName>
        <fullName>Staphylococcal complement inhibitor</fullName>
        <shortName>SCIN</shortName>
    </recommendedName>
</protein>
<comment type="function">
    <text evidence="1">Involved in countering the first line of host defense mechanisms. Efficiently inhibits opsonization, phagocytosis and killing of S.aureus by human neutrophils. Acts by binding and stabilizing human C3 convertases (C4b2a and C3bBb), leading to their inactivation. The convertases are no longer able to cleave complement C3, therefore preventing further C3b deposition on the bacterial surface and phagocytosis of the bacterium. Also prevents C5a-induced neutrophil responses (By similarity).</text>
</comment>
<comment type="subcellular location">
    <subcellularLocation>
        <location evidence="1">Secreted</location>
    </subcellularLocation>
</comment>
<comment type="similarity">
    <text evidence="3">Belongs to the SCIN family.</text>
</comment>
<proteinExistence type="evidence at protein level"/>
<reference key="1">
    <citation type="journal article" date="2001" name="Lancet">
        <title>Whole genome sequencing of meticillin-resistant Staphylococcus aureus.</title>
        <authorList>
            <person name="Kuroda M."/>
            <person name="Ohta T."/>
            <person name="Uchiyama I."/>
            <person name="Baba T."/>
            <person name="Yuzawa H."/>
            <person name="Kobayashi I."/>
            <person name="Cui L."/>
            <person name="Oguchi A."/>
            <person name="Aoki K."/>
            <person name="Nagai Y."/>
            <person name="Lian J.-Q."/>
            <person name="Ito T."/>
            <person name="Kanamori M."/>
            <person name="Matsumaru H."/>
            <person name="Maruyama A."/>
            <person name="Murakami H."/>
            <person name="Hosoyama A."/>
            <person name="Mizutani-Ui Y."/>
            <person name="Takahashi N.K."/>
            <person name="Sawano T."/>
            <person name="Inoue R."/>
            <person name="Kaito C."/>
            <person name="Sekimizu K."/>
            <person name="Hirakawa H."/>
            <person name="Kuhara S."/>
            <person name="Goto S."/>
            <person name="Yabuzaki J."/>
            <person name="Kanehisa M."/>
            <person name="Yamashita A."/>
            <person name="Oshima K."/>
            <person name="Furuya K."/>
            <person name="Yoshino C."/>
            <person name="Shiba T."/>
            <person name="Hattori M."/>
            <person name="Ogasawara N."/>
            <person name="Hayashi H."/>
            <person name="Hiramatsu K."/>
        </authorList>
    </citation>
    <scope>NUCLEOTIDE SEQUENCE [LARGE SCALE GENOMIC DNA]</scope>
    <source>
        <strain>Mu50 / ATCC 700699</strain>
    </source>
</reference>
<gene>
    <name type="primary">scn</name>
    <name type="ordered locus">SAV1942</name>
</gene>
<keyword id="KW-0002">3D-structure</keyword>
<keyword id="KW-0964">Secreted</keyword>
<keyword id="KW-0732">Signal</keyword>
<keyword id="KW-0843">Virulence</keyword>
<feature type="signal peptide" evidence="2">
    <location>
        <begin position="1"/>
        <end position="31"/>
    </location>
</feature>
<feature type="chain" id="PRO_0000319871" description="Staphylococcal complement inhibitor">
    <location>
        <begin position="32"/>
        <end position="116"/>
    </location>
</feature>
<feature type="region of interest" description="Essential for activity" evidence="1">
    <location>
        <begin position="62"/>
        <end position="79"/>
    </location>
</feature>
<feature type="helix" evidence="4">
    <location>
        <begin position="38"/>
        <end position="55"/>
    </location>
</feature>
<feature type="helix" evidence="4">
    <location>
        <begin position="57"/>
        <end position="63"/>
    </location>
</feature>
<feature type="turn" evidence="4">
    <location>
        <begin position="64"/>
        <end position="66"/>
    </location>
</feature>
<feature type="helix" evidence="4">
    <location>
        <begin position="69"/>
        <end position="88"/>
    </location>
</feature>
<feature type="helix" evidence="4">
    <location>
        <begin position="91"/>
        <end position="113"/>
    </location>
</feature>
<dbReference type="EMBL" id="BA000017">
    <property type="protein sequence ID" value="BAB58104.1"/>
    <property type="molecule type" value="Genomic_DNA"/>
</dbReference>
<dbReference type="RefSeq" id="WP_000702263.1">
    <property type="nucleotide sequence ID" value="NC_002758.2"/>
</dbReference>
<dbReference type="PDB" id="3L3O">
    <property type="method" value="X-ray"/>
    <property type="resolution" value="3.40 A"/>
    <property type="chains" value="M/P=32-116"/>
</dbReference>
<dbReference type="PDB" id="3L5N">
    <property type="method" value="X-ray"/>
    <property type="resolution" value="7.54 A"/>
    <property type="chains" value="M=32-116"/>
</dbReference>
<dbReference type="PDB" id="3NMS">
    <property type="method" value="X-ray"/>
    <property type="resolution" value="4.10 A"/>
    <property type="chains" value="M=32-116"/>
</dbReference>
<dbReference type="PDB" id="3OHX">
    <property type="method" value="X-ray"/>
    <property type="resolution" value="3.50 A"/>
    <property type="chains" value="M/P=32-116"/>
</dbReference>
<dbReference type="PDB" id="6RUV">
    <property type="method" value="X-ray"/>
    <property type="resolution" value="6.15 A"/>
    <property type="chains" value="N/Q=31-116"/>
</dbReference>
<dbReference type="PDBsum" id="3L3O"/>
<dbReference type="PDBsum" id="3L5N"/>
<dbReference type="PDBsum" id="3NMS"/>
<dbReference type="PDBsum" id="3OHX"/>
<dbReference type="PDBsum" id="6RUV"/>
<dbReference type="SMR" id="Q931M7"/>
<dbReference type="KEGG" id="sav:SAV1942"/>
<dbReference type="HOGENOM" id="CLU_166895_0_0_9"/>
<dbReference type="PhylomeDB" id="Q931M7"/>
<dbReference type="EvolutionaryTrace" id="Q931M7"/>
<dbReference type="PRO" id="PR:Q931M7"/>
<dbReference type="Proteomes" id="UP000002481">
    <property type="component" value="Chromosome"/>
</dbReference>
<dbReference type="GO" id="GO:0005576">
    <property type="term" value="C:extracellular region"/>
    <property type="evidence" value="ECO:0007669"/>
    <property type="project" value="UniProtKB-SubCell"/>
</dbReference>
<dbReference type="Gene3D" id="1.20.1270.10">
    <property type="match status" value="1"/>
</dbReference>
<dbReference type="InterPro" id="IPR029048">
    <property type="entry name" value="HSP70_C_sf"/>
</dbReference>
<dbReference type="InterPro" id="IPR021612">
    <property type="entry name" value="SCIN"/>
</dbReference>
<dbReference type="Pfam" id="PF11546">
    <property type="entry name" value="CompInhib_SCIN"/>
    <property type="match status" value="1"/>
</dbReference>
<sequence length="116" mass="13067">MKIRKSILAGTLAIVLASPLVTNLDKNEAQASTSLPTSNEYQNEKLANELKSLLDELNVNELATGSLNTYYKRTIKISGQKAMYALKSKDFKKMSEAKYQLQKIYNEIDEALKSKY</sequence>
<accession>Q931M7</accession>
<name>SCIN_STAAM</name>
<evidence type="ECO:0000250" key="1"/>
<evidence type="ECO:0000255" key="2"/>
<evidence type="ECO:0000305" key="3"/>
<evidence type="ECO:0007829" key="4">
    <source>
        <dbReference type="PDB" id="3L3O"/>
    </source>
</evidence>
<organism>
    <name type="scientific">Staphylococcus aureus (strain Mu50 / ATCC 700699)</name>
    <dbReference type="NCBI Taxonomy" id="158878"/>
    <lineage>
        <taxon>Bacteria</taxon>
        <taxon>Bacillati</taxon>
        <taxon>Bacillota</taxon>
        <taxon>Bacilli</taxon>
        <taxon>Bacillales</taxon>
        <taxon>Staphylococcaceae</taxon>
        <taxon>Staphylococcus</taxon>
    </lineage>
</organism>